<evidence type="ECO:0000255" key="1">
    <source>
        <dbReference type="HAMAP-Rule" id="MF_00368"/>
    </source>
</evidence>
<evidence type="ECO:0000305" key="2"/>
<keyword id="KW-0687">Ribonucleoprotein</keyword>
<keyword id="KW-0689">Ribosomal protein</keyword>
<comment type="function">
    <text evidence="1">Forms part of the ribosomal stalk which helps the ribosome interact with GTP-bound translation factors. Is thus essential for accurate translation.</text>
</comment>
<comment type="subunit">
    <text evidence="1">Homodimer. Part of the ribosomal stalk of the 50S ribosomal subunit. Forms a multimeric L10(L12)X complex, where L10 forms an elongated spine to which 2 to 4 L12 dimers bind in a sequential fashion. Binds GTP-bound translation factors.</text>
</comment>
<comment type="similarity">
    <text evidence="1">Belongs to the bacterial ribosomal protein bL12 family.</text>
</comment>
<proteinExistence type="inferred from homology"/>
<protein>
    <recommendedName>
        <fullName evidence="1">Large ribosomal subunit protein bL12</fullName>
    </recommendedName>
    <alternativeName>
        <fullName evidence="2">50S ribosomal protein L7/L12</fullName>
    </alternativeName>
</protein>
<organism>
    <name type="scientific">Chlorobium limicola (strain DSM 245 / NBRC 103803 / 6330)</name>
    <dbReference type="NCBI Taxonomy" id="290315"/>
    <lineage>
        <taxon>Bacteria</taxon>
        <taxon>Pseudomonadati</taxon>
        <taxon>Chlorobiota</taxon>
        <taxon>Chlorobiia</taxon>
        <taxon>Chlorobiales</taxon>
        <taxon>Chlorobiaceae</taxon>
        <taxon>Chlorobium/Pelodictyon group</taxon>
        <taxon>Chlorobium</taxon>
    </lineage>
</organism>
<sequence>MSIETLVEEIGKLTLTEASELVKALEEKFGVSAAPAIVAGIASAAPAGDAPAQEEKTEFDVVLTSAGESKINVIKVVRALTGLGLKEAKDLVDGAPKTVKEAVSKDEAEKIAKELKDVGAGVELK</sequence>
<name>RL7_CHLL2</name>
<gene>
    <name evidence="1" type="primary">rplL</name>
    <name type="ordered locus">Clim_0195</name>
</gene>
<feature type="chain" id="PRO_1000121408" description="Large ribosomal subunit protein bL12">
    <location>
        <begin position="1"/>
        <end position="125"/>
    </location>
</feature>
<accession>B3EER1</accession>
<reference key="1">
    <citation type="submission" date="2008-05" db="EMBL/GenBank/DDBJ databases">
        <title>Complete sequence of Chlorobium limicola DSM 245.</title>
        <authorList>
            <consortium name="US DOE Joint Genome Institute"/>
            <person name="Lucas S."/>
            <person name="Copeland A."/>
            <person name="Lapidus A."/>
            <person name="Glavina del Rio T."/>
            <person name="Dalin E."/>
            <person name="Tice H."/>
            <person name="Bruce D."/>
            <person name="Goodwin L."/>
            <person name="Pitluck S."/>
            <person name="Schmutz J."/>
            <person name="Larimer F."/>
            <person name="Land M."/>
            <person name="Hauser L."/>
            <person name="Kyrpides N."/>
            <person name="Ovchinnikova G."/>
            <person name="Zhao F."/>
            <person name="Li T."/>
            <person name="Liu Z."/>
            <person name="Overmann J."/>
            <person name="Bryant D.A."/>
            <person name="Richardson P."/>
        </authorList>
    </citation>
    <scope>NUCLEOTIDE SEQUENCE [LARGE SCALE GENOMIC DNA]</scope>
    <source>
        <strain>DSM 245 / NBRC 103803 / 6330</strain>
    </source>
</reference>
<dbReference type="EMBL" id="CP001097">
    <property type="protein sequence ID" value="ACD89294.1"/>
    <property type="molecule type" value="Genomic_DNA"/>
</dbReference>
<dbReference type="RefSeq" id="WP_012465175.1">
    <property type="nucleotide sequence ID" value="NC_010803.1"/>
</dbReference>
<dbReference type="SMR" id="B3EER1"/>
<dbReference type="STRING" id="290315.Clim_0195"/>
<dbReference type="KEGG" id="cli:Clim_0195"/>
<dbReference type="eggNOG" id="COG0222">
    <property type="taxonomic scope" value="Bacteria"/>
</dbReference>
<dbReference type="HOGENOM" id="CLU_086499_3_0_10"/>
<dbReference type="OrthoDB" id="9811748at2"/>
<dbReference type="Proteomes" id="UP000008841">
    <property type="component" value="Chromosome"/>
</dbReference>
<dbReference type="GO" id="GO:0022625">
    <property type="term" value="C:cytosolic large ribosomal subunit"/>
    <property type="evidence" value="ECO:0007669"/>
    <property type="project" value="TreeGrafter"/>
</dbReference>
<dbReference type="GO" id="GO:0003729">
    <property type="term" value="F:mRNA binding"/>
    <property type="evidence" value="ECO:0007669"/>
    <property type="project" value="TreeGrafter"/>
</dbReference>
<dbReference type="GO" id="GO:0003735">
    <property type="term" value="F:structural constituent of ribosome"/>
    <property type="evidence" value="ECO:0007669"/>
    <property type="project" value="InterPro"/>
</dbReference>
<dbReference type="GO" id="GO:0006412">
    <property type="term" value="P:translation"/>
    <property type="evidence" value="ECO:0007669"/>
    <property type="project" value="UniProtKB-UniRule"/>
</dbReference>
<dbReference type="CDD" id="cd00387">
    <property type="entry name" value="Ribosomal_L7_L12"/>
    <property type="match status" value="1"/>
</dbReference>
<dbReference type="FunFam" id="3.30.1390.10:FF:000001">
    <property type="entry name" value="50S ribosomal protein L7/L12"/>
    <property type="match status" value="1"/>
</dbReference>
<dbReference type="Gene3D" id="3.30.1390.10">
    <property type="match status" value="1"/>
</dbReference>
<dbReference type="Gene3D" id="1.20.5.710">
    <property type="entry name" value="Single helix bin"/>
    <property type="match status" value="1"/>
</dbReference>
<dbReference type="HAMAP" id="MF_00368">
    <property type="entry name" value="Ribosomal_bL12"/>
    <property type="match status" value="1"/>
</dbReference>
<dbReference type="InterPro" id="IPR000206">
    <property type="entry name" value="Ribosomal_bL12"/>
</dbReference>
<dbReference type="InterPro" id="IPR013823">
    <property type="entry name" value="Ribosomal_bL12_C"/>
</dbReference>
<dbReference type="InterPro" id="IPR014719">
    <property type="entry name" value="Ribosomal_bL12_C/ClpS-like"/>
</dbReference>
<dbReference type="InterPro" id="IPR008932">
    <property type="entry name" value="Ribosomal_bL12_oligo"/>
</dbReference>
<dbReference type="InterPro" id="IPR036235">
    <property type="entry name" value="Ribosomal_bL12_oligo_N_sf"/>
</dbReference>
<dbReference type="NCBIfam" id="TIGR00855">
    <property type="entry name" value="L12"/>
    <property type="match status" value="1"/>
</dbReference>
<dbReference type="PANTHER" id="PTHR45987">
    <property type="entry name" value="39S RIBOSOMAL PROTEIN L12"/>
    <property type="match status" value="1"/>
</dbReference>
<dbReference type="PANTHER" id="PTHR45987:SF4">
    <property type="entry name" value="LARGE RIBOSOMAL SUBUNIT PROTEIN BL12M"/>
    <property type="match status" value="1"/>
</dbReference>
<dbReference type="Pfam" id="PF00542">
    <property type="entry name" value="Ribosomal_L12"/>
    <property type="match status" value="1"/>
</dbReference>
<dbReference type="Pfam" id="PF16320">
    <property type="entry name" value="Ribosomal_L12_N"/>
    <property type="match status" value="1"/>
</dbReference>
<dbReference type="SUPFAM" id="SSF54736">
    <property type="entry name" value="ClpS-like"/>
    <property type="match status" value="1"/>
</dbReference>
<dbReference type="SUPFAM" id="SSF48300">
    <property type="entry name" value="Ribosomal protein L7/12, oligomerisation (N-terminal) domain"/>
    <property type="match status" value="1"/>
</dbReference>